<protein>
    <recommendedName>
        <fullName>2-dehydro-3-deoxyphosphooctonate aldolase</fullName>
        <ecNumber>2.5.1.55</ecNumber>
    </recommendedName>
    <alternativeName>
        <fullName>3-deoxy-D-manno-octulosonic acid 8-phosphate synthase</fullName>
    </alternativeName>
    <alternativeName>
        <fullName>KDO-8-phosphate synthase</fullName>
        <shortName>KDO 8-P synthase</shortName>
        <shortName>KDOPS</shortName>
    </alternativeName>
    <alternativeName>
        <fullName>Phospho-2-dehydro-3-deoxyoctonate aldolase</fullName>
    </alternativeName>
</protein>
<evidence type="ECO:0000250" key="1"/>
<evidence type="ECO:0000305" key="2"/>
<organism>
    <name type="scientific">Mannheimia haemolytica</name>
    <name type="common">Pasteurella haemolytica</name>
    <dbReference type="NCBI Taxonomy" id="75985"/>
    <lineage>
        <taxon>Bacteria</taxon>
        <taxon>Pseudomonadati</taxon>
        <taxon>Pseudomonadota</taxon>
        <taxon>Gammaproteobacteria</taxon>
        <taxon>Pasteurellales</taxon>
        <taxon>Pasteurellaceae</taxon>
        <taxon>Mannheimia</taxon>
    </lineage>
</organism>
<keyword id="KW-0963">Cytoplasm</keyword>
<keyword id="KW-0448">Lipopolysaccharide biosynthesis</keyword>
<keyword id="KW-0808">Transferase</keyword>
<name>KDSA_MANHA</name>
<reference key="1">
    <citation type="journal article" date="1996" name="J. Endotoxin Res.">
        <title>The kdsA gene of Pasteurella trehalosi (haemolytica) serotype T3 is functionally and genetically homologous to that of Escherichia coli.</title>
        <authorList>
            <person name="Burrows L.L."/>
            <person name="Lam J.S."/>
            <person name="Lo R.Y.C."/>
        </authorList>
    </citation>
    <scope>NUCLEOTIDE SEQUENCE [GENOMIC DNA]</scope>
    <source>
        <strain>Serotype T3</strain>
    </source>
</reference>
<comment type="catalytic activity">
    <reaction>
        <text>D-arabinose 5-phosphate + phosphoenolpyruvate + H2O = 3-deoxy-alpha-D-manno-2-octulosonate-8-phosphate + phosphate</text>
        <dbReference type="Rhea" id="RHEA:14053"/>
        <dbReference type="ChEBI" id="CHEBI:15377"/>
        <dbReference type="ChEBI" id="CHEBI:43474"/>
        <dbReference type="ChEBI" id="CHEBI:57693"/>
        <dbReference type="ChEBI" id="CHEBI:58702"/>
        <dbReference type="ChEBI" id="CHEBI:85985"/>
        <dbReference type="EC" id="2.5.1.55"/>
    </reaction>
</comment>
<comment type="pathway">
    <text>Carbohydrate biosynthesis; 3-deoxy-D-manno-octulosonate biosynthesis; 3-deoxy-D-manno-octulosonate from D-ribulose 5-phosphate: step 2/3.</text>
</comment>
<comment type="pathway">
    <text>Bacterial outer membrane biogenesis; lipopolysaccharide biosynthesis.</text>
</comment>
<comment type="subcellular location">
    <subcellularLocation>
        <location evidence="1">Cytoplasm</location>
    </subcellularLocation>
</comment>
<comment type="similarity">
    <text evidence="2">Belongs to the KdsA family.</text>
</comment>
<accession>P95514</accession>
<sequence>MQQKTIKLGNLEIANDKPFTLFGGMNVLESRDMAMAVCEKYVEVTNKLGVPYVFKASFDKANRSSIHSYRGPGMEEGLKIFQELKDTFGVKIITDVHEIYQCKPVAEVVDIIQLPAFLARQTDLVEAMARTGAVINVKKPQFLSPGQMGNIVEKIEECGNDQVILCDRGTNFGYDNLVVDMLGFSVMKQVSKGCPVIFDVTHSLQCRDPFGAASSGRRAQVTELARAGLAVGIAGLFLEAHPDPNNAKCDGPSALPLSTLEAFVGQMKAIDDLVKSFPEIDTSK</sequence>
<dbReference type="EC" id="2.5.1.55"/>
<dbReference type="EMBL" id="U52971">
    <property type="protein sequence ID" value="AAB36513.1"/>
    <property type="molecule type" value="Genomic_DNA"/>
</dbReference>
<dbReference type="SMR" id="P95514"/>
<dbReference type="STRING" id="75985.WC39_03125"/>
<dbReference type="BRENDA" id="2.5.1.55">
    <property type="organism ID" value="3177"/>
</dbReference>
<dbReference type="UniPathway" id="UPA00030"/>
<dbReference type="UniPathway" id="UPA00357">
    <property type="reaction ID" value="UER00474"/>
</dbReference>
<dbReference type="GO" id="GO:0005737">
    <property type="term" value="C:cytoplasm"/>
    <property type="evidence" value="ECO:0007669"/>
    <property type="project" value="UniProtKB-SubCell"/>
</dbReference>
<dbReference type="GO" id="GO:0008676">
    <property type="term" value="F:3-deoxy-8-phosphooctulonate synthase activity"/>
    <property type="evidence" value="ECO:0007669"/>
    <property type="project" value="UniProtKB-UniRule"/>
</dbReference>
<dbReference type="GO" id="GO:0019294">
    <property type="term" value="P:keto-3-deoxy-D-manno-octulosonic acid biosynthetic process"/>
    <property type="evidence" value="ECO:0007669"/>
    <property type="project" value="UniProtKB-UniRule"/>
</dbReference>
<dbReference type="FunFam" id="3.20.20.70:FF:000058">
    <property type="entry name" value="2-dehydro-3-deoxyphosphooctonate aldolase"/>
    <property type="match status" value="1"/>
</dbReference>
<dbReference type="Gene3D" id="3.20.20.70">
    <property type="entry name" value="Aldolase class I"/>
    <property type="match status" value="1"/>
</dbReference>
<dbReference type="HAMAP" id="MF_00056">
    <property type="entry name" value="KDO8P_synth"/>
    <property type="match status" value="1"/>
</dbReference>
<dbReference type="InterPro" id="IPR013785">
    <property type="entry name" value="Aldolase_TIM"/>
</dbReference>
<dbReference type="InterPro" id="IPR006218">
    <property type="entry name" value="DAHP1/KDSA"/>
</dbReference>
<dbReference type="InterPro" id="IPR006269">
    <property type="entry name" value="KDO8P_synthase"/>
</dbReference>
<dbReference type="NCBIfam" id="TIGR01362">
    <property type="entry name" value="KDO8P_synth"/>
    <property type="match status" value="1"/>
</dbReference>
<dbReference type="NCBIfam" id="NF003543">
    <property type="entry name" value="PRK05198.1"/>
    <property type="match status" value="1"/>
</dbReference>
<dbReference type="NCBIfam" id="NF009109">
    <property type="entry name" value="PRK12457.1"/>
    <property type="match status" value="1"/>
</dbReference>
<dbReference type="PANTHER" id="PTHR21057">
    <property type="entry name" value="PHOSPHO-2-DEHYDRO-3-DEOXYHEPTONATE ALDOLASE"/>
    <property type="match status" value="1"/>
</dbReference>
<dbReference type="Pfam" id="PF00793">
    <property type="entry name" value="DAHP_synth_1"/>
    <property type="match status" value="1"/>
</dbReference>
<dbReference type="SUPFAM" id="SSF51569">
    <property type="entry name" value="Aldolase"/>
    <property type="match status" value="1"/>
</dbReference>
<gene>
    <name type="primary">kdsA</name>
</gene>
<proteinExistence type="inferred from homology"/>
<feature type="chain" id="PRO_0000187145" description="2-dehydro-3-deoxyphosphooctonate aldolase">
    <location>
        <begin position="1"/>
        <end position="284"/>
    </location>
</feature>